<feature type="chain" id="PRO_0000110144" description="Fluoride-specific ion channel FluC 2">
    <location>
        <begin position="1"/>
        <end position="140"/>
    </location>
</feature>
<feature type="transmembrane region" description="Helical" evidence="1">
    <location>
        <begin position="7"/>
        <end position="27"/>
    </location>
</feature>
<feature type="transmembrane region" description="Helical" evidence="1">
    <location>
        <begin position="45"/>
        <end position="65"/>
    </location>
</feature>
<feature type="transmembrane region" description="Helical" evidence="1">
    <location>
        <begin position="77"/>
        <end position="97"/>
    </location>
</feature>
<feature type="transmembrane region" description="Helical" evidence="1">
    <location>
        <begin position="106"/>
        <end position="126"/>
    </location>
</feature>
<feature type="binding site" evidence="1">
    <location>
        <position position="85"/>
    </location>
    <ligand>
        <name>Na(+)</name>
        <dbReference type="ChEBI" id="CHEBI:29101"/>
        <note>structural</note>
    </ligand>
</feature>
<feature type="binding site" evidence="1">
    <location>
        <position position="88"/>
    </location>
    <ligand>
        <name>Na(+)</name>
        <dbReference type="ChEBI" id="CHEBI:29101"/>
        <note>structural</note>
    </ligand>
</feature>
<reference key="1">
    <citation type="journal article" date="2004" name="Proc. Natl. Acad. Sci. U.S.A.">
        <title>The complete genomic sequence of Nocardia farcinica IFM 10152.</title>
        <authorList>
            <person name="Ishikawa J."/>
            <person name="Yamashita A."/>
            <person name="Mikami Y."/>
            <person name="Hoshino Y."/>
            <person name="Kurita H."/>
            <person name="Hotta K."/>
            <person name="Shiba T."/>
            <person name="Hattori M."/>
        </authorList>
    </citation>
    <scope>NUCLEOTIDE SEQUENCE [LARGE SCALE GENOMIC DNA]</scope>
    <source>
        <strain>IFM 10152</strain>
    </source>
</reference>
<evidence type="ECO:0000255" key="1">
    <source>
        <dbReference type="HAMAP-Rule" id="MF_00454"/>
    </source>
</evidence>
<gene>
    <name evidence="1" type="primary">fluC2</name>
    <name evidence="1" type="synonym">crcB2</name>
    <name type="ordered locus">NFA_44550</name>
</gene>
<proteinExistence type="inferred from homology"/>
<comment type="function">
    <text evidence="1">Fluoride-specific ion channel. Important for reducing fluoride concentration in the cell, thus reducing its toxicity.</text>
</comment>
<comment type="catalytic activity">
    <reaction evidence="1">
        <text>fluoride(in) = fluoride(out)</text>
        <dbReference type="Rhea" id="RHEA:76159"/>
        <dbReference type="ChEBI" id="CHEBI:17051"/>
    </reaction>
    <physiologicalReaction direction="left-to-right" evidence="1">
        <dbReference type="Rhea" id="RHEA:76160"/>
    </physiologicalReaction>
</comment>
<comment type="activity regulation">
    <text evidence="1">Na(+) is not transported, but it plays an essential structural role and its presence is essential for fluoride channel function.</text>
</comment>
<comment type="subcellular location">
    <subcellularLocation>
        <location evidence="1">Cell membrane</location>
        <topology evidence="1">Multi-pass membrane protein</topology>
    </subcellularLocation>
</comment>
<comment type="similarity">
    <text evidence="1">Belongs to the fluoride channel Fluc/FEX (TC 1.A.43) family.</text>
</comment>
<dbReference type="EMBL" id="AP006618">
    <property type="protein sequence ID" value="BAD59306.1"/>
    <property type="molecule type" value="Genomic_DNA"/>
</dbReference>
<dbReference type="RefSeq" id="WP_011210990.1">
    <property type="nucleotide sequence ID" value="NC_006361.1"/>
</dbReference>
<dbReference type="SMR" id="Q5YR85"/>
<dbReference type="STRING" id="247156.NFA_44550"/>
<dbReference type="GeneID" id="61135064"/>
<dbReference type="KEGG" id="nfa:NFA_44550"/>
<dbReference type="eggNOG" id="COG0239">
    <property type="taxonomic scope" value="Bacteria"/>
</dbReference>
<dbReference type="HOGENOM" id="CLU_114342_1_0_11"/>
<dbReference type="OrthoDB" id="4408652at2"/>
<dbReference type="Proteomes" id="UP000006820">
    <property type="component" value="Chromosome"/>
</dbReference>
<dbReference type="GO" id="GO:0005886">
    <property type="term" value="C:plasma membrane"/>
    <property type="evidence" value="ECO:0007669"/>
    <property type="project" value="UniProtKB-SubCell"/>
</dbReference>
<dbReference type="GO" id="GO:0062054">
    <property type="term" value="F:fluoride channel activity"/>
    <property type="evidence" value="ECO:0007669"/>
    <property type="project" value="UniProtKB-UniRule"/>
</dbReference>
<dbReference type="GO" id="GO:0046872">
    <property type="term" value="F:metal ion binding"/>
    <property type="evidence" value="ECO:0007669"/>
    <property type="project" value="UniProtKB-KW"/>
</dbReference>
<dbReference type="GO" id="GO:0140114">
    <property type="term" value="P:cellular detoxification of fluoride"/>
    <property type="evidence" value="ECO:0007669"/>
    <property type="project" value="UniProtKB-UniRule"/>
</dbReference>
<dbReference type="HAMAP" id="MF_00454">
    <property type="entry name" value="FluC"/>
    <property type="match status" value="1"/>
</dbReference>
<dbReference type="InterPro" id="IPR003691">
    <property type="entry name" value="FluC"/>
</dbReference>
<dbReference type="NCBIfam" id="TIGR00494">
    <property type="entry name" value="crcB"/>
    <property type="match status" value="1"/>
</dbReference>
<dbReference type="PANTHER" id="PTHR28259">
    <property type="entry name" value="FLUORIDE EXPORT PROTEIN 1-RELATED"/>
    <property type="match status" value="1"/>
</dbReference>
<dbReference type="PANTHER" id="PTHR28259:SF1">
    <property type="entry name" value="FLUORIDE EXPORT PROTEIN 1-RELATED"/>
    <property type="match status" value="1"/>
</dbReference>
<dbReference type="Pfam" id="PF02537">
    <property type="entry name" value="CRCB"/>
    <property type="match status" value="1"/>
</dbReference>
<sequence>MSAPARVPPLDPAILLAISLGGGLGALLRYLISTWWPTPPGHVPWATFVVNVTGCFAIGVLMVLVTEAWVTHRLLRPFAGVGLLGGFTTFSTYGLEIRTLLESGAVLEALGYLAGTVLAALAGVVLGTGAARWATGAARR</sequence>
<name>FLUC2_NOCFA</name>
<protein>
    <recommendedName>
        <fullName evidence="1">Fluoride-specific ion channel FluC 2</fullName>
    </recommendedName>
</protein>
<keyword id="KW-1003">Cell membrane</keyword>
<keyword id="KW-0407">Ion channel</keyword>
<keyword id="KW-0406">Ion transport</keyword>
<keyword id="KW-0472">Membrane</keyword>
<keyword id="KW-0479">Metal-binding</keyword>
<keyword id="KW-1185">Reference proteome</keyword>
<keyword id="KW-0915">Sodium</keyword>
<keyword id="KW-0812">Transmembrane</keyword>
<keyword id="KW-1133">Transmembrane helix</keyword>
<keyword id="KW-0813">Transport</keyword>
<organism>
    <name type="scientific">Nocardia farcinica (strain IFM 10152)</name>
    <dbReference type="NCBI Taxonomy" id="247156"/>
    <lineage>
        <taxon>Bacteria</taxon>
        <taxon>Bacillati</taxon>
        <taxon>Actinomycetota</taxon>
        <taxon>Actinomycetes</taxon>
        <taxon>Mycobacteriales</taxon>
        <taxon>Nocardiaceae</taxon>
        <taxon>Nocardia</taxon>
    </lineage>
</organism>
<accession>Q5YR85</accession>